<keyword id="KW-0963">Cytoplasm</keyword>
<keyword id="KW-0488">Methylation</keyword>
<keyword id="KW-0648">Protein biosynthesis</keyword>
<reference key="1">
    <citation type="submission" date="2008-05" db="EMBL/GenBank/DDBJ databases">
        <title>Genome sequence of Helicobacter pylori from the remote Amazon: traces of Asian ancestry of the first Americans.</title>
        <authorList>
            <person name="Kersulyte D."/>
            <person name="Kalia A."/>
            <person name="Gilman R.H."/>
            <person name="Berg D.E."/>
        </authorList>
    </citation>
    <scope>NUCLEOTIDE SEQUENCE [LARGE SCALE GENOMIC DNA]</scope>
    <source>
        <strain>Shi470</strain>
    </source>
</reference>
<organism>
    <name type="scientific">Helicobacter pylori (strain Shi470)</name>
    <dbReference type="NCBI Taxonomy" id="512562"/>
    <lineage>
        <taxon>Bacteria</taxon>
        <taxon>Pseudomonadati</taxon>
        <taxon>Campylobacterota</taxon>
        <taxon>Epsilonproteobacteria</taxon>
        <taxon>Campylobacterales</taxon>
        <taxon>Helicobacteraceae</taxon>
        <taxon>Helicobacter</taxon>
    </lineage>
</organism>
<proteinExistence type="inferred from homology"/>
<accession>B2US00</accession>
<feature type="chain" id="PRO_1000093542" description="Peptide chain release factor 2">
    <location>
        <begin position="1"/>
        <end position="363"/>
    </location>
</feature>
<feature type="modified residue" description="N5-methylglutamine" evidence="1">
    <location>
        <position position="251"/>
    </location>
</feature>
<sequence length="363" mass="41326">MDNYTYSELLKSLQNKCDNIALIIKPEKIKQELERIEKEQEDPNFWQDVLKARDTNKEKVRLNRLLETYQKTKNSLDESTELFELAQNDNDEVTLSLLYEEAPVLEHSVQKVEIEIMLSGENDASNAIITIQPGAGGTESQDWASILYRMYLRWAERRGFKSEILDYQDGEEAGIKGVAFIIKGENAYGYLKNENGVHRLVRISPFDANAKRHTSFASVQISPELDDDIDIEIDEKDVRYDYYRASGAGGQHVNKTESAVRITHFPTGIVVQCQNDRSQHKNKASALKMLKSKLYELELEKQQSTAKNEEKSEIGWGHQIRSYVLAPYQQVKDARSNTAYSNVEAILDGDIDAILEGVLIAKA</sequence>
<comment type="function">
    <text evidence="1">Peptide chain release factor 2 directs the termination of translation in response to the peptide chain termination codons UGA and UAA.</text>
</comment>
<comment type="subcellular location">
    <subcellularLocation>
        <location evidence="1">Cytoplasm</location>
    </subcellularLocation>
</comment>
<comment type="PTM">
    <text evidence="1">Methylated by PrmC. Methylation increases the termination efficiency of RF2.</text>
</comment>
<comment type="similarity">
    <text evidence="1">Belongs to the prokaryotic/mitochondrial release factor family.</text>
</comment>
<dbReference type="EMBL" id="CP001072">
    <property type="protein sequence ID" value="ACD47632.1"/>
    <property type="molecule type" value="Genomic_DNA"/>
</dbReference>
<dbReference type="RefSeq" id="WP_000371099.1">
    <property type="nucleotide sequence ID" value="NC_010698.2"/>
</dbReference>
<dbReference type="SMR" id="B2US00"/>
<dbReference type="KEGG" id="hps:HPSH_00860"/>
<dbReference type="HOGENOM" id="CLU_036856_6_0_7"/>
<dbReference type="GO" id="GO:0005737">
    <property type="term" value="C:cytoplasm"/>
    <property type="evidence" value="ECO:0007669"/>
    <property type="project" value="UniProtKB-SubCell"/>
</dbReference>
<dbReference type="GO" id="GO:0016149">
    <property type="term" value="F:translation release factor activity, codon specific"/>
    <property type="evidence" value="ECO:0007669"/>
    <property type="project" value="UniProtKB-UniRule"/>
</dbReference>
<dbReference type="FunFam" id="3.30.160.20:FF:000010">
    <property type="entry name" value="Peptide chain release factor 2"/>
    <property type="match status" value="1"/>
</dbReference>
<dbReference type="Gene3D" id="3.30.160.20">
    <property type="match status" value="1"/>
</dbReference>
<dbReference type="Gene3D" id="3.30.70.1660">
    <property type="match status" value="1"/>
</dbReference>
<dbReference type="Gene3D" id="1.20.58.410">
    <property type="entry name" value="Release factor"/>
    <property type="match status" value="1"/>
</dbReference>
<dbReference type="HAMAP" id="MF_00094">
    <property type="entry name" value="Rel_fac_2"/>
    <property type="match status" value="1"/>
</dbReference>
<dbReference type="InterPro" id="IPR005139">
    <property type="entry name" value="PCRF"/>
</dbReference>
<dbReference type="InterPro" id="IPR000352">
    <property type="entry name" value="Pep_chain_release_fac_I"/>
</dbReference>
<dbReference type="InterPro" id="IPR045853">
    <property type="entry name" value="Pep_chain_release_fac_I_sf"/>
</dbReference>
<dbReference type="InterPro" id="IPR004374">
    <property type="entry name" value="PrfB"/>
</dbReference>
<dbReference type="NCBIfam" id="TIGR00020">
    <property type="entry name" value="prfB"/>
    <property type="match status" value="1"/>
</dbReference>
<dbReference type="PANTHER" id="PTHR43116:SF3">
    <property type="entry name" value="CLASS I PEPTIDE CHAIN RELEASE FACTOR"/>
    <property type="match status" value="1"/>
</dbReference>
<dbReference type="PANTHER" id="PTHR43116">
    <property type="entry name" value="PEPTIDE CHAIN RELEASE FACTOR 2"/>
    <property type="match status" value="1"/>
</dbReference>
<dbReference type="Pfam" id="PF03462">
    <property type="entry name" value="PCRF"/>
    <property type="match status" value="1"/>
</dbReference>
<dbReference type="Pfam" id="PF00472">
    <property type="entry name" value="RF-1"/>
    <property type="match status" value="1"/>
</dbReference>
<dbReference type="SMART" id="SM00937">
    <property type="entry name" value="PCRF"/>
    <property type="match status" value="1"/>
</dbReference>
<dbReference type="SUPFAM" id="SSF75620">
    <property type="entry name" value="Release factor"/>
    <property type="match status" value="1"/>
</dbReference>
<dbReference type="PROSITE" id="PS00745">
    <property type="entry name" value="RF_PROK_I"/>
    <property type="match status" value="1"/>
</dbReference>
<evidence type="ECO:0000255" key="1">
    <source>
        <dbReference type="HAMAP-Rule" id="MF_00094"/>
    </source>
</evidence>
<name>RF2_HELPS</name>
<protein>
    <recommendedName>
        <fullName evidence="1">Peptide chain release factor 2</fullName>
        <shortName evidence="1">RF-2</shortName>
    </recommendedName>
</protein>
<gene>
    <name evidence="1" type="primary">prfB</name>
    <name type="ordered locus">HPSH_00860</name>
</gene>